<dbReference type="EMBL" id="CP001349">
    <property type="protein sequence ID" value="ACL58263.1"/>
    <property type="molecule type" value="Genomic_DNA"/>
</dbReference>
<dbReference type="RefSeq" id="WP_015929926.1">
    <property type="nucleotide sequence ID" value="NC_011894.1"/>
</dbReference>
<dbReference type="SMR" id="B8IL75"/>
<dbReference type="STRING" id="460265.Mnod_3340"/>
<dbReference type="KEGG" id="mno:Mnod_3340"/>
<dbReference type="eggNOG" id="COG1381">
    <property type="taxonomic scope" value="Bacteria"/>
</dbReference>
<dbReference type="HOGENOM" id="CLU_086029_0_0_5"/>
<dbReference type="OrthoDB" id="9804792at2"/>
<dbReference type="Proteomes" id="UP000008207">
    <property type="component" value="Chromosome"/>
</dbReference>
<dbReference type="GO" id="GO:0043590">
    <property type="term" value="C:bacterial nucleoid"/>
    <property type="evidence" value="ECO:0007669"/>
    <property type="project" value="TreeGrafter"/>
</dbReference>
<dbReference type="GO" id="GO:0006310">
    <property type="term" value="P:DNA recombination"/>
    <property type="evidence" value="ECO:0007669"/>
    <property type="project" value="UniProtKB-UniRule"/>
</dbReference>
<dbReference type="GO" id="GO:0006302">
    <property type="term" value="P:double-strand break repair"/>
    <property type="evidence" value="ECO:0007669"/>
    <property type="project" value="TreeGrafter"/>
</dbReference>
<dbReference type="Gene3D" id="2.40.50.140">
    <property type="entry name" value="Nucleic acid-binding proteins"/>
    <property type="match status" value="1"/>
</dbReference>
<dbReference type="Gene3D" id="1.20.1440.120">
    <property type="entry name" value="Recombination protein O, C-terminal domain"/>
    <property type="match status" value="1"/>
</dbReference>
<dbReference type="HAMAP" id="MF_00201">
    <property type="entry name" value="RecO"/>
    <property type="match status" value="1"/>
</dbReference>
<dbReference type="InterPro" id="IPR037278">
    <property type="entry name" value="ARFGAP/RecO"/>
</dbReference>
<dbReference type="InterPro" id="IPR022572">
    <property type="entry name" value="DNA_rep/recomb_RecO_N"/>
</dbReference>
<dbReference type="InterPro" id="IPR012340">
    <property type="entry name" value="NA-bd_OB-fold"/>
</dbReference>
<dbReference type="InterPro" id="IPR003717">
    <property type="entry name" value="RecO"/>
</dbReference>
<dbReference type="InterPro" id="IPR042242">
    <property type="entry name" value="RecO_C"/>
</dbReference>
<dbReference type="NCBIfam" id="TIGR00613">
    <property type="entry name" value="reco"/>
    <property type="match status" value="1"/>
</dbReference>
<dbReference type="PANTHER" id="PTHR33991">
    <property type="entry name" value="DNA REPAIR PROTEIN RECO"/>
    <property type="match status" value="1"/>
</dbReference>
<dbReference type="PANTHER" id="PTHR33991:SF1">
    <property type="entry name" value="DNA REPAIR PROTEIN RECO"/>
    <property type="match status" value="1"/>
</dbReference>
<dbReference type="Pfam" id="PF02565">
    <property type="entry name" value="RecO_C"/>
    <property type="match status" value="1"/>
</dbReference>
<dbReference type="Pfam" id="PF11967">
    <property type="entry name" value="RecO_N"/>
    <property type="match status" value="1"/>
</dbReference>
<dbReference type="SUPFAM" id="SSF57863">
    <property type="entry name" value="ArfGap/RecO-like zinc finger"/>
    <property type="match status" value="1"/>
</dbReference>
<dbReference type="SUPFAM" id="SSF50249">
    <property type="entry name" value="Nucleic acid-binding proteins"/>
    <property type="match status" value="1"/>
</dbReference>
<proteinExistence type="inferred from homology"/>
<sequence>MQWSDEGLVLGARRHGETSVVLELMTAGHGRHLGLVHGGRSRRMQPVLQPGNRVRAVWRARLDEGLGHFAVEPIESAAGRLMGSRLALYGLAHAAALLRLLPERDPHPSLYAAAQVLVAHLTDPAIAPALMVRFELAVLADLGFGLDLSACAATGSNAYLAYVSPKSGRAVSAAAGEPWRDRLLALPDFLVAREAGGTGATPTPRDVRQGFTLTGYFLDQHVWHPRGVAPPEARELFVALGTADAG</sequence>
<organism>
    <name type="scientific">Methylobacterium nodulans (strain LMG 21967 / CNCM I-2342 / ORS 2060)</name>
    <dbReference type="NCBI Taxonomy" id="460265"/>
    <lineage>
        <taxon>Bacteria</taxon>
        <taxon>Pseudomonadati</taxon>
        <taxon>Pseudomonadota</taxon>
        <taxon>Alphaproteobacteria</taxon>
        <taxon>Hyphomicrobiales</taxon>
        <taxon>Methylobacteriaceae</taxon>
        <taxon>Methylobacterium</taxon>
    </lineage>
</organism>
<reference key="1">
    <citation type="submission" date="2009-01" db="EMBL/GenBank/DDBJ databases">
        <title>Complete sequence of chromosome of Methylobacterium nodulans ORS 2060.</title>
        <authorList>
            <consortium name="US DOE Joint Genome Institute"/>
            <person name="Lucas S."/>
            <person name="Copeland A."/>
            <person name="Lapidus A."/>
            <person name="Glavina del Rio T."/>
            <person name="Dalin E."/>
            <person name="Tice H."/>
            <person name="Bruce D."/>
            <person name="Goodwin L."/>
            <person name="Pitluck S."/>
            <person name="Sims D."/>
            <person name="Brettin T."/>
            <person name="Detter J.C."/>
            <person name="Han C."/>
            <person name="Larimer F."/>
            <person name="Land M."/>
            <person name="Hauser L."/>
            <person name="Kyrpides N."/>
            <person name="Ivanova N."/>
            <person name="Marx C.J."/>
            <person name="Richardson P."/>
        </authorList>
    </citation>
    <scope>NUCLEOTIDE SEQUENCE [LARGE SCALE GENOMIC DNA]</scope>
    <source>
        <strain>LMG 21967 / CNCM I-2342 / ORS 2060</strain>
    </source>
</reference>
<keyword id="KW-0227">DNA damage</keyword>
<keyword id="KW-0233">DNA recombination</keyword>
<keyword id="KW-0234">DNA repair</keyword>
<keyword id="KW-1185">Reference proteome</keyword>
<feature type="chain" id="PRO_1000193396" description="DNA repair protein RecO">
    <location>
        <begin position="1"/>
        <end position="246"/>
    </location>
</feature>
<name>RECO_METNO</name>
<evidence type="ECO:0000255" key="1">
    <source>
        <dbReference type="HAMAP-Rule" id="MF_00201"/>
    </source>
</evidence>
<protein>
    <recommendedName>
        <fullName evidence="1">DNA repair protein RecO</fullName>
    </recommendedName>
    <alternativeName>
        <fullName evidence="1">Recombination protein O</fullName>
    </alternativeName>
</protein>
<gene>
    <name evidence="1" type="primary">recO</name>
    <name type="ordered locus">Mnod_3340</name>
</gene>
<comment type="function">
    <text evidence="1">Involved in DNA repair and RecF pathway recombination.</text>
</comment>
<comment type="similarity">
    <text evidence="1">Belongs to the RecO family.</text>
</comment>
<accession>B8IL75</accession>